<feature type="chain" id="PRO_0000080706" description="RNA helicase Mov10l1">
    <location>
        <begin position="1"/>
        <end position="1211"/>
    </location>
</feature>
<feature type="region of interest" description="Disordered" evidence="3">
    <location>
        <begin position="340"/>
        <end position="385"/>
    </location>
</feature>
<feature type="region of interest" description="Disordered" evidence="3">
    <location>
        <begin position="674"/>
        <end position="710"/>
    </location>
</feature>
<feature type="region of interest" description="Disordered" evidence="3">
    <location>
        <begin position="1192"/>
        <end position="1211"/>
    </location>
</feature>
<feature type="short sequence motif" description="DEAG box">
    <location>
        <begin position="886"/>
        <end position="889"/>
    </location>
</feature>
<feature type="compositionally biased region" description="Polar residues" evidence="3">
    <location>
        <begin position="345"/>
        <end position="372"/>
    </location>
</feature>
<feature type="compositionally biased region" description="Polar residues" evidence="3">
    <location>
        <begin position="674"/>
        <end position="688"/>
    </location>
</feature>
<feature type="compositionally biased region" description="Basic and acidic residues" evidence="3">
    <location>
        <begin position="694"/>
        <end position="710"/>
    </location>
</feature>
<feature type="binding site" evidence="2">
    <location>
        <begin position="770"/>
        <end position="777"/>
    </location>
    <ligand>
        <name>ATP</name>
        <dbReference type="ChEBI" id="CHEBI:30616"/>
    </ligand>
</feature>
<feature type="splice variant" id="VSP_010945" description="In isoform 3." evidence="9">
    <location>
        <begin position="1"/>
        <end position="902"/>
    </location>
</feature>
<feature type="splice variant" id="VSP_003390" description="In isoform 2." evidence="9">
    <location>
        <begin position="1"/>
        <end position="873"/>
    </location>
</feature>
<feature type="splice variant" id="VSP_046082" description="In isoform 5." evidence="9">
    <original>MLSLAAKLVAFFWRTADTPREEAGQLEPELAE</original>
    <variation>MSFLPVRSVIGG</variation>
    <location>
        <begin position="1"/>
        <end position="32"/>
    </location>
</feature>
<feature type="splice variant" id="VSP_003391" description="In isoform 2." evidence="9">
    <original>GV</original>
    <variation>MF</variation>
    <location>
        <begin position="874"/>
        <end position="875"/>
    </location>
</feature>
<feature type="splice variant" id="VSP_010946" description="In isoform 3." evidence="9">
    <location>
        <begin position="910"/>
        <end position="964"/>
    </location>
</feature>
<feature type="splice variant" id="VSP_010947" description="In isoform 3." evidence="9">
    <original>EKIRILLRN</original>
    <variation>RPAQARLVL</variation>
    <location>
        <begin position="1074"/>
        <end position="1082"/>
    </location>
</feature>
<feature type="splice variant" id="VSP_010948" description="In isoform 3." evidence="9">
    <location>
        <begin position="1083"/>
        <end position="1211"/>
    </location>
</feature>
<feature type="splice variant" id="VSP_045413" description="In isoform 4." evidence="10">
    <location>
        <begin position="1109"/>
        <end position="1154"/>
    </location>
</feature>
<feature type="splice variant" id="VSP_046083" description="In isoform 5." evidence="9">
    <original>DPCFGALLEYSITNGVYMGCDLPPALQSLQNCGEGVADPSYPVVPESTGPEKHQEPS</original>
    <variation>LWRGGGRPLLPSGARIHRTREASGAQLICSG</variation>
    <location>
        <begin position="1155"/>
        <end position="1211"/>
    </location>
</feature>
<feature type="sequence variant" id="VAR_059457" description="In dbSNP:rs12628964.">
    <original>T</original>
    <variation>S</variation>
    <location>
        <position position="18"/>
    </location>
</feature>
<feature type="sequence variant" id="VAR_034100" description="In dbSNP:rs9617066.">
    <original>M</original>
    <variation>L</variation>
    <location>
        <position position="57"/>
    </location>
</feature>
<feature type="sequence variant" id="VAR_020148" description="In dbSNP:rs3810971.">
    <original>R</original>
    <variation>C</variation>
    <location>
        <position position="182"/>
    </location>
</feature>
<feature type="sequence variant" id="VAR_013694" description="In dbSNP:rs760749." evidence="6 7">
    <original>I</original>
    <variation>L</variation>
    <location>
        <position position="454"/>
    </location>
</feature>
<feature type="sequence variant" id="VAR_013695" description="In dbSNP:rs2340601.">
    <original>V</original>
    <variation>I</variation>
    <location>
        <position position="650"/>
    </location>
</feature>
<feature type="sequence variant" id="VAR_034101" description="In dbSNP:rs3736689.">
    <original>S</original>
    <variation>G</variation>
    <location>
        <position position="683"/>
    </location>
</feature>
<feature type="sequence variant" id="VAR_087327" description="In SPGF73; dbSNP:rs1479684172." evidence="8">
    <original>S</original>
    <variation>I</variation>
    <location>
        <position position="816"/>
    </location>
</feature>
<feature type="sequence variant" id="VAR_013696" description="In dbSNP:rs2272837." evidence="5 7">
    <original>Q</original>
    <variation>R</variation>
    <location>
        <position position="820"/>
    </location>
</feature>
<feature type="sequence variant" id="VAR_087328" description="In SPGF73; uncertain significance; dbSNP:rs1278182234." evidence="8">
    <original>G</original>
    <variation>R</variation>
    <location>
        <position position="848"/>
    </location>
</feature>
<feature type="sequence variant" id="VAR_013697" description="In dbSNP:rs2272843." evidence="7">
    <original>A</original>
    <variation>E</variation>
    <location>
        <position position="1179"/>
    </location>
</feature>
<feature type="sequence conflict" description="In Ref. 2; BAH13697." evidence="11" ref="2">
    <original>Q</original>
    <variation>H</variation>
    <location>
        <position position="321"/>
    </location>
</feature>
<feature type="sequence conflict" description="In Ref. 2; BAH13697." evidence="11" ref="2">
    <original>L</original>
    <variation>P</variation>
    <location>
        <position position="1016"/>
    </location>
</feature>
<feature type="sequence conflict" description="In Ref. 2; BAA90895." evidence="11" ref="2">
    <original>I</original>
    <variation>V</variation>
    <location>
        <position position="1063"/>
    </location>
</feature>
<feature type="sequence conflict" description="In Ref. 2; BAA90895." evidence="11" ref="2">
    <original>F</original>
    <variation>L</variation>
    <location>
        <position position="1096"/>
    </location>
</feature>
<evidence type="ECO:0000250" key="1">
    <source>
        <dbReference type="UniProtKB" id="Q99MV5"/>
    </source>
</evidence>
<evidence type="ECO:0000255" key="2"/>
<evidence type="ECO:0000256" key="3">
    <source>
        <dbReference type="SAM" id="MobiDB-lite"/>
    </source>
</evidence>
<evidence type="ECO:0000269" key="4">
    <source>
    </source>
</evidence>
<evidence type="ECO:0000269" key="5">
    <source>
    </source>
</evidence>
<evidence type="ECO:0000269" key="6">
    <source>
    </source>
</evidence>
<evidence type="ECO:0000269" key="7">
    <source>
    </source>
</evidence>
<evidence type="ECO:0000269" key="8">
    <source>
    </source>
</evidence>
<evidence type="ECO:0000303" key="9">
    <source>
    </source>
</evidence>
<evidence type="ECO:0000303" key="10">
    <source>
    </source>
</evidence>
<evidence type="ECO:0000305" key="11"/>
<evidence type="ECO:0000312" key="12">
    <source>
        <dbReference type="HGNC" id="HGNC:7201"/>
    </source>
</evidence>
<accession>Q9BXT6</accession>
<accession>A7E211</accession>
<accession>A8MXC6</accession>
<accession>B7WPP1</accession>
<accession>B7Z7R1</accession>
<accession>F5H403</accession>
<accession>Q5TGD5</accession>
<accession>Q8NBD4</accession>
<accession>Q9NXW3</accession>
<accession>Q9UFB3</accession>
<accession>Q9UGX9</accession>
<name>M10L1_HUMAN</name>
<protein>
    <recommendedName>
        <fullName evidence="11">RNA helicase Mov10l1</fullName>
        <ecNumber evidence="1">3.6.4.13</ecNumber>
    </recommendedName>
    <alternativeName>
        <fullName evidence="12">Moloney leukemia virus 10-like protein 1</fullName>
        <shortName evidence="12">MOV10-like protein 1</shortName>
    </alternativeName>
</protein>
<comment type="function">
    <text evidence="1">ATP-dependent RNA helicase required during spermatogenesis to repress transposable elements and prevent their mobilization, which is essential for germline integrity. Acts via the piRNA metabolic process, which mediates the repression of transposable elements during meiosis by forming complexes composed of piRNAs and Piwi proteins and governs the methylation and subsequent repression of transposons. Involved in the primary piRNA metabolic process. Specifically binds to piRNA precursors and promotes the generation of intermediate piRNA processing fragments that are subsequently loaded to Piwi proteins. Acts via its ATP-dependent RNA helicase activity: displays 5'-3' RNA unwinding activity and probably mediates unwinding and funneling of single-stranded piRNA precursor transcripts to the endonuclease that catalyzes the first cleavage step of piRNA processing to generate piRNA intermediate fragments that are subsequently loaded to Piwi proteins.</text>
</comment>
<comment type="catalytic activity">
    <reaction evidence="1">
        <text>ATP + H2O = ADP + phosphate + H(+)</text>
        <dbReference type="Rhea" id="RHEA:13065"/>
        <dbReference type="ChEBI" id="CHEBI:15377"/>
        <dbReference type="ChEBI" id="CHEBI:15378"/>
        <dbReference type="ChEBI" id="CHEBI:30616"/>
        <dbReference type="ChEBI" id="CHEBI:43474"/>
        <dbReference type="ChEBI" id="CHEBI:456216"/>
        <dbReference type="EC" id="3.6.4.13"/>
    </reaction>
</comment>
<comment type="subunit">
    <text evidence="1">Interacts with PIWIL1. Interacts with PIWIL2. Interacts with PIWIL4. Interacts with HSPA2. Interacts with PLD6.</text>
</comment>
<comment type="subcellular location">
    <subcellularLocation>
        <location evidence="1">Cytoplasm</location>
    </subcellularLocation>
    <text evidence="1">Component of the meiotic nuage, also named P granule, a germ-cell-specific organelle required to repress transposon activity during meiosis.</text>
</comment>
<comment type="alternative products">
    <event type="alternative splicing"/>
    <isoform>
        <id>Q9BXT6-1</id>
        <name>1</name>
        <sequence type="displayed"/>
    </isoform>
    <isoform>
        <id>Q9BXT6-2</id>
        <name>2</name>
        <sequence type="described" ref="VSP_003390 VSP_003391"/>
    </isoform>
    <isoform>
        <id>Q9BXT6-3</id>
        <name>3</name>
        <sequence type="described" ref="VSP_010945 VSP_010946 VSP_010947 VSP_010948"/>
    </isoform>
    <isoform>
        <id>Q9BXT6-4</id>
        <name>4</name>
        <sequence type="described" ref="VSP_045413"/>
    </isoform>
    <isoform>
        <id>Q9BXT6-5</id>
        <name>5</name>
        <sequence type="described" ref="VSP_046082 VSP_046083"/>
    </isoform>
    <text>Additional isoforms seem to exist.</text>
</comment>
<comment type="tissue specificity">
    <molecule>Isoform 1</molecule>
    <text evidence="4">Specifically expressed in testis.</text>
</comment>
<comment type="disease" evidence="8">
    <disease id="DI-06416">
        <name>Spermatogenic failure 73</name>
        <acronym>SPGF73</acronym>
        <description>An autosomal recessive male infertility disorder characterized by non-obstructive azoospermia due to meiotic arrest.</description>
        <dbReference type="MIM" id="619878"/>
    </disease>
    <text>The disease is caused by variants affecting the gene represented in this entry.</text>
</comment>
<comment type="similarity">
    <text evidence="11">Belongs to the DNA2/NAM7 helicase family. SDE3 subfamily.</text>
</comment>
<gene>
    <name evidence="12" type="primary">MOV10L1</name>
</gene>
<organism>
    <name type="scientific">Homo sapiens</name>
    <name type="common">Human</name>
    <dbReference type="NCBI Taxonomy" id="9606"/>
    <lineage>
        <taxon>Eukaryota</taxon>
        <taxon>Metazoa</taxon>
        <taxon>Chordata</taxon>
        <taxon>Craniata</taxon>
        <taxon>Vertebrata</taxon>
        <taxon>Euteleostomi</taxon>
        <taxon>Mammalia</taxon>
        <taxon>Eutheria</taxon>
        <taxon>Euarchontoglires</taxon>
        <taxon>Primates</taxon>
        <taxon>Haplorrhini</taxon>
        <taxon>Catarrhini</taxon>
        <taxon>Hominidae</taxon>
        <taxon>Homo</taxon>
    </lineage>
</organism>
<keyword id="KW-0025">Alternative splicing</keyword>
<keyword id="KW-0067">ATP-binding</keyword>
<keyword id="KW-0963">Cytoplasm</keyword>
<keyword id="KW-0217">Developmental protein</keyword>
<keyword id="KW-0225">Disease variant</keyword>
<keyword id="KW-0347">Helicase</keyword>
<keyword id="KW-0378">Hydrolase</keyword>
<keyword id="KW-0547">Nucleotide-binding</keyword>
<keyword id="KW-1267">Proteomics identification</keyword>
<keyword id="KW-1185">Reference proteome</keyword>
<proteinExistence type="evidence at protein level"/>
<sequence length="1211" mass="135293">MLSLAAKLVAFFWRTADTPREEAGQLEPELAEGDTKLKTVRGVVTRYCSDYGMIDDMIYFSSDAVTSRVLLNVGQEVIAVVEENKVSNGLKAIRVEAVSDKWEDDSRNHGSPSDCGPRVLIGCVTSLVEGAGCISQTTYFSLESVCEGFEPCKGDWVEAEYRIRPGTWSSEATSVKPLRYKRVDKVCISSLCGRNGVLEESIFFTLDSLKLPDGYTPRRGDVVNAVVVESSQSCYVWRALCMTLVKRRDAAPVHEATHFYGTILLKNKGDIEVTQVTHFGTLKEGRSKTMVIWIENKGDIPQNLVSCKLAGWDKSKQFRFQMLDKDQMCPVVSFVSVPEKENSSDENINSLNSHTKNKTSQMSESSLVNNRGISPGDCTCKGENGEKDNILSRKQMTEPEPGGLVPPGGKTFIVVICDGKNPGRCKELLLLCFSDFLIGRYLEVNVISGEESLIAAREPFSWKKLKSSQALTSAKTTVVVTAQKRNSRRQLPSFLPQYPIPDRLRKCVEQKIDILTFQPLLAELLNMSNYKEKFSTLLWLEEIYAEMELKEYNMSGIILRRNGDLLVLEVPGLAEGRPSLYAGDKLILKTQEYNGHAIEYISYVTEIHEEDVTLKINPEFEQAYNFEPMDVEFTYNRTTSRRCHFALEHVIHLGVKVLFPEEIILQSPQVTGNWNHAQDTKSSGQSTSKKNRKTMTDQAEHGTEERRVGDKDLPVLAPFTAEMSDWVDEIQTPKARKMEFFNPVLNENQKLAVKRILSGDCRPLPYILFGPPGTGKTVTIIEAVLQVHFALPDSRILVCAPSNSAADLVCLRLHESKVLQPATMVRVNATCRFEEIVIDAVKPYCRDGEDIWKASRFRIIITTCSSSGLFYQIGVRVGHFTHVFVDEAGQASEPECLIPLGLMSDISGQIVLAGDPMQLGPVIKSRLAMAYGLNVSFLERLMSRPAYQRDENAFGACGAHNPLLVTKLVKNYRSHEALLMLPSRLFYHRELEVCADPTVVTSLLGWEKLPKKGFPLIFHGVRGSEAREGKSPSWFNPAEAVQVLRYCCLLAHSISSQVSASDIGVITPYRKQVEKIRILLRNVDLMDIKVGSVEEFQGQEYLVIIISTVRSNEDRFEDDRYFLGFLSNSKRFNVAITRPKALLIVLGNPHVLVRDPCFGALLEYSITNGVYMGCDLPPALQSLQNCGEGVADPSYPVVPESTGPEKHQEPS</sequence>
<reference key="1">
    <citation type="journal article" date="2001" name="Nat. Genet.">
        <title>An abundance of X-linked genes expressed in spermatogonia.</title>
        <authorList>
            <person name="Wang P.J."/>
            <person name="McCarrey J.R."/>
            <person name="Yang F."/>
            <person name="Page D.C."/>
        </authorList>
    </citation>
    <scope>NUCLEOTIDE SEQUENCE (ISOFORM 1)</scope>
    <scope>TISSUE SPECIFICITY</scope>
    <source>
        <tissue>Testis</tissue>
    </source>
</reference>
<reference key="2">
    <citation type="journal article" date="2004" name="Nat. Genet.">
        <title>Complete sequencing and characterization of 21,243 full-length human cDNAs.</title>
        <authorList>
            <person name="Ota T."/>
            <person name="Suzuki Y."/>
            <person name="Nishikawa T."/>
            <person name="Otsuki T."/>
            <person name="Sugiyama T."/>
            <person name="Irie R."/>
            <person name="Wakamatsu A."/>
            <person name="Hayashi K."/>
            <person name="Sato H."/>
            <person name="Nagai K."/>
            <person name="Kimura K."/>
            <person name="Makita H."/>
            <person name="Sekine M."/>
            <person name="Obayashi M."/>
            <person name="Nishi T."/>
            <person name="Shibahara T."/>
            <person name="Tanaka T."/>
            <person name="Ishii S."/>
            <person name="Yamamoto J."/>
            <person name="Saito K."/>
            <person name="Kawai Y."/>
            <person name="Isono Y."/>
            <person name="Nakamura Y."/>
            <person name="Nagahari K."/>
            <person name="Murakami K."/>
            <person name="Yasuda T."/>
            <person name="Iwayanagi T."/>
            <person name="Wagatsuma M."/>
            <person name="Shiratori A."/>
            <person name="Sudo H."/>
            <person name="Hosoiri T."/>
            <person name="Kaku Y."/>
            <person name="Kodaira H."/>
            <person name="Kondo H."/>
            <person name="Sugawara M."/>
            <person name="Takahashi M."/>
            <person name="Kanda K."/>
            <person name="Yokoi T."/>
            <person name="Furuya T."/>
            <person name="Kikkawa E."/>
            <person name="Omura Y."/>
            <person name="Abe K."/>
            <person name="Kamihara K."/>
            <person name="Katsuta N."/>
            <person name="Sato K."/>
            <person name="Tanikawa M."/>
            <person name="Yamazaki M."/>
            <person name="Ninomiya K."/>
            <person name="Ishibashi T."/>
            <person name="Yamashita H."/>
            <person name="Murakawa K."/>
            <person name="Fujimori K."/>
            <person name="Tanai H."/>
            <person name="Kimata M."/>
            <person name="Watanabe M."/>
            <person name="Hiraoka S."/>
            <person name="Chiba Y."/>
            <person name="Ishida S."/>
            <person name="Ono Y."/>
            <person name="Takiguchi S."/>
            <person name="Watanabe S."/>
            <person name="Yosida M."/>
            <person name="Hotuta T."/>
            <person name="Kusano J."/>
            <person name="Kanehori K."/>
            <person name="Takahashi-Fujii A."/>
            <person name="Hara H."/>
            <person name="Tanase T.-O."/>
            <person name="Nomura Y."/>
            <person name="Togiya S."/>
            <person name="Komai F."/>
            <person name="Hara R."/>
            <person name="Takeuchi K."/>
            <person name="Arita M."/>
            <person name="Imose N."/>
            <person name="Musashino K."/>
            <person name="Yuuki H."/>
            <person name="Oshima A."/>
            <person name="Sasaki N."/>
            <person name="Aotsuka S."/>
            <person name="Yoshikawa Y."/>
            <person name="Matsunawa H."/>
            <person name="Ichihara T."/>
            <person name="Shiohata N."/>
            <person name="Sano S."/>
            <person name="Moriya S."/>
            <person name="Momiyama H."/>
            <person name="Satoh N."/>
            <person name="Takami S."/>
            <person name="Terashima Y."/>
            <person name="Suzuki O."/>
            <person name="Nakagawa S."/>
            <person name="Senoh A."/>
            <person name="Mizoguchi H."/>
            <person name="Goto Y."/>
            <person name="Shimizu F."/>
            <person name="Wakebe H."/>
            <person name="Hishigaki H."/>
            <person name="Watanabe T."/>
            <person name="Sugiyama A."/>
            <person name="Takemoto M."/>
            <person name="Kawakami B."/>
            <person name="Yamazaki M."/>
            <person name="Watanabe K."/>
            <person name="Kumagai A."/>
            <person name="Itakura S."/>
            <person name="Fukuzumi Y."/>
            <person name="Fujimori Y."/>
            <person name="Komiyama M."/>
            <person name="Tashiro H."/>
            <person name="Tanigami A."/>
            <person name="Fujiwara T."/>
            <person name="Ono T."/>
            <person name="Yamada K."/>
            <person name="Fujii Y."/>
            <person name="Ozaki K."/>
            <person name="Hirao M."/>
            <person name="Ohmori Y."/>
            <person name="Kawabata A."/>
            <person name="Hikiji T."/>
            <person name="Kobatake N."/>
            <person name="Inagaki H."/>
            <person name="Ikema Y."/>
            <person name="Okamoto S."/>
            <person name="Okitani R."/>
            <person name="Kawakami T."/>
            <person name="Noguchi S."/>
            <person name="Itoh T."/>
            <person name="Shigeta K."/>
            <person name="Senba T."/>
            <person name="Matsumura K."/>
            <person name="Nakajima Y."/>
            <person name="Mizuno T."/>
            <person name="Morinaga M."/>
            <person name="Sasaki M."/>
            <person name="Togashi T."/>
            <person name="Oyama M."/>
            <person name="Hata H."/>
            <person name="Watanabe M."/>
            <person name="Komatsu T."/>
            <person name="Mizushima-Sugano J."/>
            <person name="Satoh T."/>
            <person name="Shirai Y."/>
            <person name="Takahashi Y."/>
            <person name="Nakagawa K."/>
            <person name="Okumura K."/>
            <person name="Nagase T."/>
            <person name="Nomura N."/>
            <person name="Kikuchi H."/>
            <person name="Masuho Y."/>
            <person name="Yamashita R."/>
            <person name="Nakai K."/>
            <person name="Yada T."/>
            <person name="Nakamura Y."/>
            <person name="Ohara O."/>
            <person name="Isogai T."/>
            <person name="Sugano S."/>
        </authorList>
    </citation>
    <scope>NUCLEOTIDE SEQUENCE [LARGE SCALE MRNA] (ISOFORMS 2; 3 AND 5)</scope>
    <scope>VARIANT ARG-820</scope>
    <source>
        <tissue>Adipose tissue</tissue>
        <tissue>Cerebellum</tissue>
        <tissue>Testis</tissue>
    </source>
</reference>
<reference key="3">
    <citation type="journal article" date="2004" name="Genome Biol.">
        <title>A genome annotation-driven approach to cloning the human ORFeome.</title>
        <authorList>
            <person name="Collins J.E."/>
            <person name="Wright C.L."/>
            <person name="Edwards C.A."/>
            <person name="Davis M.P."/>
            <person name="Grinham J.A."/>
            <person name="Cole C.G."/>
            <person name="Goward M.E."/>
            <person name="Aguado B."/>
            <person name="Mallya M."/>
            <person name="Mokrab Y."/>
            <person name="Huckle E.J."/>
            <person name="Beare D.M."/>
            <person name="Dunham I."/>
        </authorList>
    </citation>
    <scope>NUCLEOTIDE SEQUENCE [LARGE SCALE MRNA] (ISOFORM 1)</scope>
</reference>
<reference key="4">
    <citation type="journal article" date="1999" name="Nature">
        <title>The DNA sequence of human chromosome 22.</title>
        <authorList>
            <person name="Dunham I."/>
            <person name="Hunt A.R."/>
            <person name="Collins J.E."/>
            <person name="Bruskiewich R."/>
            <person name="Beare D.M."/>
            <person name="Clamp M."/>
            <person name="Smink L.J."/>
            <person name="Ainscough R."/>
            <person name="Almeida J.P."/>
            <person name="Babbage A.K."/>
            <person name="Bagguley C."/>
            <person name="Bailey J."/>
            <person name="Barlow K.F."/>
            <person name="Bates K.N."/>
            <person name="Beasley O.P."/>
            <person name="Bird C.P."/>
            <person name="Blakey S.E."/>
            <person name="Bridgeman A.M."/>
            <person name="Buck D."/>
            <person name="Burgess J."/>
            <person name="Burrill W.D."/>
            <person name="Burton J."/>
            <person name="Carder C."/>
            <person name="Carter N.P."/>
            <person name="Chen Y."/>
            <person name="Clark G."/>
            <person name="Clegg S.M."/>
            <person name="Cobley V.E."/>
            <person name="Cole C.G."/>
            <person name="Collier R.E."/>
            <person name="Connor R."/>
            <person name="Conroy D."/>
            <person name="Corby N.R."/>
            <person name="Coville G.J."/>
            <person name="Cox A.V."/>
            <person name="Davis J."/>
            <person name="Dawson E."/>
            <person name="Dhami P.D."/>
            <person name="Dockree C."/>
            <person name="Dodsworth S.J."/>
            <person name="Durbin R.M."/>
            <person name="Ellington A.G."/>
            <person name="Evans K.L."/>
            <person name="Fey J.M."/>
            <person name="Fleming K."/>
            <person name="French L."/>
            <person name="Garner A.A."/>
            <person name="Gilbert J.G.R."/>
            <person name="Goward M.E."/>
            <person name="Grafham D.V."/>
            <person name="Griffiths M.N.D."/>
            <person name="Hall C."/>
            <person name="Hall R.E."/>
            <person name="Hall-Tamlyn G."/>
            <person name="Heathcott R.W."/>
            <person name="Ho S."/>
            <person name="Holmes S."/>
            <person name="Hunt S.E."/>
            <person name="Jones M.C."/>
            <person name="Kershaw J."/>
            <person name="Kimberley A.M."/>
            <person name="King A."/>
            <person name="Laird G.K."/>
            <person name="Langford C.F."/>
            <person name="Leversha M.A."/>
            <person name="Lloyd C."/>
            <person name="Lloyd D.M."/>
            <person name="Martyn I.D."/>
            <person name="Mashreghi-Mohammadi M."/>
            <person name="Matthews L.H."/>
            <person name="Mccann O.T."/>
            <person name="Mcclay J."/>
            <person name="Mclaren S."/>
            <person name="McMurray A.A."/>
            <person name="Milne S.A."/>
            <person name="Mortimore B.J."/>
            <person name="Odell C.N."/>
            <person name="Pavitt R."/>
            <person name="Pearce A.V."/>
            <person name="Pearson D."/>
            <person name="Phillimore B.J.C.T."/>
            <person name="Phillips S.H."/>
            <person name="Plumb R.W."/>
            <person name="Ramsay H."/>
            <person name="Ramsey Y."/>
            <person name="Rogers L."/>
            <person name="Ross M.T."/>
            <person name="Scott C.E."/>
            <person name="Sehra H.K."/>
            <person name="Skuce C.D."/>
            <person name="Smalley S."/>
            <person name="Smith M.L."/>
            <person name="Soderlund C."/>
            <person name="Spragon L."/>
            <person name="Steward C.A."/>
            <person name="Sulston J.E."/>
            <person name="Swann R.M."/>
            <person name="Vaudin M."/>
            <person name="Wall M."/>
            <person name="Wallis J.M."/>
            <person name="Whiteley M.N."/>
            <person name="Willey D.L."/>
            <person name="Williams L."/>
            <person name="Williams S.A."/>
            <person name="Williamson H."/>
            <person name="Wilmer T.E."/>
            <person name="Wilming L."/>
            <person name="Wright C.L."/>
            <person name="Hubbard T."/>
            <person name="Bentley D.R."/>
            <person name="Beck S."/>
            <person name="Rogers J."/>
            <person name="Shimizu N."/>
            <person name="Minoshima S."/>
            <person name="Kawasaki K."/>
            <person name="Sasaki T."/>
            <person name="Asakawa S."/>
            <person name="Kudoh J."/>
            <person name="Shintani A."/>
            <person name="Shibuya K."/>
            <person name="Yoshizaki Y."/>
            <person name="Aoki N."/>
            <person name="Mitsuyama S."/>
            <person name="Roe B.A."/>
            <person name="Chen F."/>
            <person name="Chu L."/>
            <person name="Crabtree J."/>
            <person name="Deschamps S."/>
            <person name="Do A."/>
            <person name="Do T."/>
            <person name="Dorman A."/>
            <person name="Fang F."/>
            <person name="Fu Y."/>
            <person name="Hu P."/>
            <person name="Hua A."/>
            <person name="Kenton S."/>
            <person name="Lai H."/>
            <person name="Lao H.I."/>
            <person name="Lewis J."/>
            <person name="Lewis S."/>
            <person name="Lin S.-P."/>
            <person name="Loh P."/>
            <person name="Malaj E."/>
            <person name="Nguyen T."/>
            <person name="Pan H."/>
            <person name="Phan S."/>
            <person name="Qi S."/>
            <person name="Qian Y."/>
            <person name="Ray L."/>
            <person name="Ren Q."/>
            <person name="Shaull S."/>
            <person name="Sloan D."/>
            <person name="Song L."/>
            <person name="Wang Q."/>
            <person name="Wang Y."/>
            <person name="Wang Z."/>
            <person name="White J."/>
            <person name="Willingham D."/>
            <person name="Wu H."/>
            <person name="Yao Z."/>
            <person name="Zhan M."/>
            <person name="Zhang G."/>
            <person name="Chissoe S."/>
            <person name="Murray J."/>
            <person name="Miller N."/>
            <person name="Minx P."/>
            <person name="Fulton R."/>
            <person name="Johnson D."/>
            <person name="Bemis G."/>
            <person name="Bentley D."/>
            <person name="Bradshaw H."/>
            <person name="Bourne S."/>
            <person name="Cordes M."/>
            <person name="Du Z."/>
            <person name="Fulton L."/>
            <person name="Goela D."/>
            <person name="Graves T."/>
            <person name="Hawkins J."/>
            <person name="Hinds K."/>
            <person name="Kemp K."/>
            <person name="Latreille P."/>
            <person name="Layman D."/>
            <person name="Ozersky P."/>
            <person name="Rohlfing T."/>
            <person name="Scheet P."/>
            <person name="Walker C."/>
            <person name="Wamsley A."/>
            <person name="Wohldmann P."/>
            <person name="Pepin K."/>
            <person name="Nelson J."/>
            <person name="Korf I."/>
            <person name="Bedell J.A."/>
            <person name="Hillier L.W."/>
            <person name="Mardis E."/>
            <person name="Waterston R."/>
            <person name="Wilson R."/>
            <person name="Emanuel B.S."/>
            <person name="Shaikh T."/>
            <person name="Kurahashi H."/>
            <person name="Saitta S."/>
            <person name="Budarf M.L."/>
            <person name="McDermid H.E."/>
            <person name="Johnson A."/>
            <person name="Wong A.C.C."/>
            <person name="Morrow B.E."/>
            <person name="Edelmann L."/>
            <person name="Kim U.J."/>
            <person name="Shizuya H."/>
            <person name="Simon M.I."/>
            <person name="Dumanski J.P."/>
            <person name="Peyrard M."/>
            <person name="Kedra D."/>
            <person name="Seroussi E."/>
            <person name="Fransson I."/>
            <person name="Tapia I."/>
            <person name="Bruder C.E."/>
            <person name="O'Brien K.P."/>
            <person name="Wilkinson P."/>
            <person name="Bodenteich A."/>
            <person name="Hartman K."/>
            <person name="Hu X."/>
            <person name="Khan A.S."/>
            <person name="Lane L."/>
            <person name="Tilahun Y."/>
            <person name="Wright H."/>
        </authorList>
    </citation>
    <scope>NUCLEOTIDE SEQUENCE [LARGE SCALE GENOMIC DNA]</scope>
</reference>
<reference key="5">
    <citation type="journal article" date="2004" name="Genome Res.">
        <title>The status, quality, and expansion of the NIH full-length cDNA project: the Mammalian Gene Collection (MGC).</title>
        <authorList>
            <consortium name="The MGC Project Team"/>
        </authorList>
    </citation>
    <scope>NUCLEOTIDE SEQUENCE [LARGE SCALE MRNA] (ISOFORM 4)</scope>
    <scope>VARIANT LEU-454</scope>
</reference>
<reference key="6">
    <citation type="journal article" date="2007" name="BMC Genomics">
        <title>The full-ORF clone resource of the German cDNA consortium.</title>
        <authorList>
            <person name="Bechtel S."/>
            <person name="Rosenfelder H."/>
            <person name="Duda A."/>
            <person name="Schmidt C.P."/>
            <person name="Ernst U."/>
            <person name="Wellenreuther R."/>
            <person name="Mehrle A."/>
            <person name="Schuster C."/>
            <person name="Bahr A."/>
            <person name="Bloecker H."/>
            <person name="Heubner D."/>
            <person name="Hoerlein A."/>
            <person name="Michel G."/>
            <person name="Wedler H."/>
            <person name="Koehrer K."/>
            <person name="Ottenwaelder B."/>
            <person name="Poustka A."/>
            <person name="Wiemann S."/>
            <person name="Schupp I."/>
        </authorList>
    </citation>
    <scope>NUCLEOTIDE SEQUENCE [LARGE SCALE MRNA] OF 534-1211</scope>
    <scope>VARIANTS LEU-454; ARG-820 AND GLU-1179</scope>
    <source>
        <tissue>Testis</tissue>
    </source>
</reference>
<reference key="7">
    <citation type="journal article" date="2022" name="N. Engl. J. Med.">
        <title>Defective piRNA Processing and Azoospermia.</title>
        <authorList>
            <person name="Li L."/>
            <person name="Tan Y.Q."/>
            <person name="Lu L.Y."/>
        </authorList>
    </citation>
    <scope>VARIANTS SPGF73 ILE-816 AND ARG-848</scope>
    <scope>INVOLVEMENT IN SPGF73</scope>
</reference>
<dbReference type="EC" id="3.6.4.13" evidence="1"/>
<dbReference type="EMBL" id="AF285604">
    <property type="protein sequence ID" value="AAK31983.1"/>
    <property type="molecule type" value="mRNA"/>
</dbReference>
<dbReference type="EMBL" id="AK000033">
    <property type="protein sequence ID" value="BAA90895.1"/>
    <property type="molecule type" value="mRNA"/>
</dbReference>
<dbReference type="EMBL" id="AK090740">
    <property type="protein sequence ID" value="BAC03511.1"/>
    <property type="molecule type" value="mRNA"/>
</dbReference>
<dbReference type="EMBL" id="AK302401">
    <property type="protein sequence ID" value="BAH13697.1"/>
    <property type="molecule type" value="mRNA"/>
</dbReference>
<dbReference type="EMBL" id="CR456466">
    <property type="protein sequence ID" value="CAG30352.1"/>
    <property type="molecule type" value="mRNA"/>
</dbReference>
<dbReference type="EMBL" id="AL022328">
    <property type="status" value="NOT_ANNOTATED_CDS"/>
    <property type="molecule type" value="Genomic_DNA"/>
</dbReference>
<dbReference type="EMBL" id="AL034546">
    <property type="status" value="NOT_ANNOTATED_CDS"/>
    <property type="molecule type" value="Genomic_DNA"/>
</dbReference>
<dbReference type="EMBL" id="BC150137">
    <property type="protein sequence ID" value="AAI50138.1"/>
    <property type="molecule type" value="mRNA"/>
</dbReference>
<dbReference type="EMBL" id="BC152539">
    <property type="protein sequence ID" value="AAI52540.1"/>
    <property type="molecule type" value="mRNA"/>
</dbReference>
<dbReference type="EMBL" id="AL133068">
    <property type="protein sequence ID" value="CAB61391.1"/>
    <property type="molecule type" value="mRNA"/>
</dbReference>
<dbReference type="CCDS" id="CCDS14084.1">
    <molecule id="Q9BXT6-1"/>
</dbReference>
<dbReference type="CCDS" id="CCDS54541.1">
    <molecule id="Q9BXT6-4"/>
</dbReference>
<dbReference type="CCDS" id="CCDS54542.1">
    <molecule id="Q9BXT6-5"/>
</dbReference>
<dbReference type="CCDS" id="CCDS54543.1">
    <molecule id="Q9BXT6-2"/>
</dbReference>
<dbReference type="PIR" id="T42668">
    <property type="entry name" value="T42668"/>
</dbReference>
<dbReference type="RefSeq" id="NP_001157576.1">
    <molecule id="Q9BXT6-4"/>
    <property type="nucleotide sequence ID" value="NM_001164104.2"/>
</dbReference>
<dbReference type="RefSeq" id="NP_001157577.1">
    <molecule id="Q9BXT6-5"/>
    <property type="nucleotide sequence ID" value="NM_001164105.2"/>
</dbReference>
<dbReference type="RefSeq" id="NP_001157578.1">
    <molecule id="Q9BXT6-2"/>
    <property type="nucleotide sequence ID" value="NM_001164106.1"/>
</dbReference>
<dbReference type="RefSeq" id="NP_061868.1">
    <molecule id="Q9BXT6-1"/>
    <property type="nucleotide sequence ID" value="NM_018995.3"/>
</dbReference>
<dbReference type="BioGRID" id="119963">
    <property type="interactions" value="6"/>
</dbReference>
<dbReference type="FunCoup" id="Q9BXT6">
    <property type="interactions" value="207"/>
</dbReference>
<dbReference type="IntAct" id="Q9BXT6">
    <property type="interactions" value="2"/>
</dbReference>
<dbReference type="STRING" id="9606.ENSP00000262794"/>
<dbReference type="GlyCosmos" id="Q9BXT6">
    <property type="glycosylation" value="1 site, 2 glycans"/>
</dbReference>
<dbReference type="GlyGen" id="Q9BXT6">
    <property type="glycosylation" value="1 site, 2 O-linked glycans (1 site)"/>
</dbReference>
<dbReference type="iPTMnet" id="Q9BXT6"/>
<dbReference type="PhosphoSitePlus" id="Q9BXT6"/>
<dbReference type="BioMuta" id="MOV10L1"/>
<dbReference type="DMDM" id="22095856"/>
<dbReference type="jPOST" id="Q9BXT6"/>
<dbReference type="MassIVE" id="Q9BXT6"/>
<dbReference type="PaxDb" id="9606-ENSP00000262794"/>
<dbReference type="PeptideAtlas" id="Q9BXT6"/>
<dbReference type="ProteomicsDB" id="2313"/>
<dbReference type="ProteomicsDB" id="26428"/>
<dbReference type="ProteomicsDB" id="79508">
    <molecule id="Q9BXT6-1"/>
</dbReference>
<dbReference type="ProteomicsDB" id="79509">
    <molecule id="Q9BXT6-2"/>
</dbReference>
<dbReference type="ProteomicsDB" id="79510">
    <molecule id="Q9BXT6-3"/>
</dbReference>
<dbReference type="Antibodypedia" id="14100">
    <property type="antibodies" value="85 antibodies from 20 providers"/>
</dbReference>
<dbReference type="DNASU" id="54456"/>
<dbReference type="Ensembl" id="ENST00000262794.10">
    <molecule id="Q9BXT6-1"/>
    <property type="protein sequence ID" value="ENSP00000262794.5"/>
    <property type="gene ID" value="ENSG00000073146.17"/>
</dbReference>
<dbReference type="Ensembl" id="ENST00000354853.2">
    <molecule id="Q9BXT6-3"/>
    <property type="protein sequence ID" value="ENSP00000346917.2"/>
    <property type="gene ID" value="ENSG00000073146.17"/>
</dbReference>
<dbReference type="Ensembl" id="ENST00000395852.5">
    <molecule id="Q9BXT6-2"/>
    <property type="protein sequence ID" value="ENSP00000379193.1"/>
    <property type="gene ID" value="ENSG00000073146.17"/>
</dbReference>
<dbReference type="Ensembl" id="ENST00000395858.7">
    <molecule id="Q9BXT6-4"/>
    <property type="protein sequence ID" value="ENSP00000379199.3"/>
    <property type="gene ID" value="ENSG00000073146.17"/>
</dbReference>
<dbReference type="Ensembl" id="ENST00000540615.5">
    <molecule id="Q9BXT6-5"/>
    <property type="protein sequence ID" value="ENSP00000438542.1"/>
    <property type="gene ID" value="ENSG00000073146.17"/>
</dbReference>
<dbReference type="GeneID" id="54456"/>
<dbReference type="KEGG" id="hsa:54456"/>
<dbReference type="MANE-Select" id="ENST00000262794.10">
    <property type="protein sequence ID" value="ENSP00000262794.5"/>
    <property type="RefSeq nucleotide sequence ID" value="NM_018995.3"/>
    <property type="RefSeq protein sequence ID" value="NP_061868.1"/>
</dbReference>
<dbReference type="UCSC" id="uc003bjj.4">
    <molecule id="Q9BXT6-1"/>
    <property type="organism name" value="human"/>
</dbReference>
<dbReference type="AGR" id="HGNC:7201"/>
<dbReference type="CTD" id="54456"/>
<dbReference type="DisGeNET" id="54456"/>
<dbReference type="GeneCards" id="MOV10L1"/>
<dbReference type="HGNC" id="HGNC:7201">
    <property type="gene designation" value="MOV10L1"/>
</dbReference>
<dbReference type="HPA" id="ENSG00000073146">
    <property type="expression patterns" value="Tissue enriched (testis)"/>
</dbReference>
<dbReference type="MalaCards" id="MOV10L1"/>
<dbReference type="MIM" id="605794">
    <property type="type" value="gene"/>
</dbReference>
<dbReference type="MIM" id="619878">
    <property type="type" value="phenotype"/>
</dbReference>
<dbReference type="neXtProt" id="NX_Q9BXT6"/>
<dbReference type="OpenTargets" id="ENSG00000073146"/>
<dbReference type="Orphanet" id="399805">
    <property type="disease" value="Male infertility with azoospermia or oligozoospermia due to single gene mutation"/>
</dbReference>
<dbReference type="PharmGKB" id="PA30909"/>
<dbReference type="VEuPathDB" id="HostDB:ENSG00000073146"/>
<dbReference type="eggNOG" id="KOG1804">
    <property type="taxonomic scope" value="Eukaryota"/>
</dbReference>
<dbReference type="GeneTree" id="ENSGT00940000160150"/>
<dbReference type="HOGENOM" id="CLU_001666_3_1_1"/>
<dbReference type="InParanoid" id="Q9BXT6"/>
<dbReference type="OMA" id="VDDCWRH"/>
<dbReference type="OrthoDB" id="6513042at2759"/>
<dbReference type="PAN-GO" id="Q9BXT6">
    <property type="GO annotations" value="4 GO annotations based on evolutionary models"/>
</dbReference>
<dbReference type="PhylomeDB" id="Q9BXT6"/>
<dbReference type="TreeFam" id="TF323999"/>
<dbReference type="PathwayCommons" id="Q9BXT6"/>
<dbReference type="Reactome" id="R-HSA-5601884">
    <property type="pathway name" value="PIWI-interacting RNA (piRNA) biogenesis"/>
</dbReference>
<dbReference type="SignaLink" id="Q9BXT6"/>
<dbReference type="BioGRID-ORCS" id="54456">
    <property type="hits" value="10 hits in 1145 CRISPR screens"/>
</dbReference>
<dbReference type="ChiTaRS" id="MOV10L1">
    <property type="organism name" value="human"/>
</dbReference>
<dbReference type="GenomeRNAi" id="54456"/>
<dbReference type="Pharos" id="Q9BXT6">
    <property type="development level" value="Tbio"/>
</dbReference>
<dbReference type="PRO" id="PR:Q9BXT6"/>
<dbReference type="Proteomes" id="UP000005640">
    <property type="component" value="Chromosome 22"/>
</dbReference>
<dbReference type="RNAct" id="Q9BXT6">
    <property type="molecule type" value="protein"/>
</dbReference>
<dbReference type="Bgee" id="ENSG00000073146">
    <property type="expression patterns" value="Expressed in right testis and 96 other cell types or tissues"/>
</dbReference>
<dbReference type="ExpressionAtlas" id="Q9BXT6">
    <property type="expression patterns" value="baseline and differential"/>
</dbReference>
<dbReference type="GO" id="GO:0005829">
    <property type="term" value="C:cytosol"/>
    <property type="evidence" value="ECO:0000318"/>
    <property type="project" value="GO_Central"/>
</dbReference>
<dbReference type="GO" id="GO:0043186">
    <property type="term" value="C:P granule"/>
    <property type="evidence" value="ECO:0000250"/>
    <property type="project" value="UniProtKB"/>
</dbReference>
<dbReference type="GO" id="GO:0071546">
    <property type="term" value="C:pi-body"/>
    <property type="evidence" value="ECO:0000250"/>
    <property type="project" value="UniProtKB"/>
</dbReference>
<dbReference type="GO" id="GO:0005524">
    <property type="term" value="F:ATP binding"/>
    <property type="evidence" value="ECO:0000304"/>
    <property type="project" value="UniProtKB"/>
</dbReference>
<dbReference type="GO" id="GO:0016887">
    <property type="term" value="F:ATP hydrolysis activity"/>
    <property type="evidence" value="ECO:0007669"/>
    <property type="project" value="RHEA"/>
</dbReference>
<dbReference type="GO" id="GO:0000287">
    <property type="term" value="F:magnesium ion binding"/>
    <property type="evidence" value="ECO:0000304"/>
    <property type="project" value="UniProtKB"/>
</dbReference>
<dbReference type="GO" id="GO:0003723">
    <property type="term" value="F:RNA binding"/>
    <property type="evidence" value="ECO:0000318"/>
    <property type="project" value="GO_Central"/>
</dbReference>
<dbReference type="GO" id="GO:0003724">
    <property type="term" value="F:RNA helicase activity"/>
    <property type="evidence" value="ECO:0000250"/>
    <property type="project" value="UniProtKB"/>
</dbReference>
<dbReference type="GO" id="GO:0007281">
    <property type="term" value="P:germ cell development"/>
    <property type="evidence" value="ECO:0000270"/>
    <property type="project" value="UniProtKB"/>
</dbReference>
<dbReference type="GO" id="GO:0007141">
    <property type="term" value="P:male meiosis I"/>
    <property type="evidence" value="ECO:0000250"/>
    <property type="project" value="UniProtKB"/>
</dbReference>
<dbReference type="GO" id="GO:0034587">
    <property type="term" value="P:piRNA processing"/>
    <property type="evidence" value="ECO:0000250"/>
    <property type="project" value="UniProtKB"/>
</dbReference>
<dbReference type="GO" id="GO:0035194">
    <property type="term" value="P:regulatory ncRNA-mediated post-transcriptional gene silencing"/>
    <property type="evidence" value="ECO:0000318"/>
    <property type="project" value="GO_Central"/>
</dbReference>
<dbReference type="GO" id="GO:0007283">
    <property type="term" value="P:spermatogenesis"/>
    <property type="evidence" value="ECO:0000270"/>
    <property type="project" value="UniProtKB"/>
</dbReference>
<dbReference type="GO" id="GO:0141196">
    <property type="term" value="P:transposable element silencing by piRNA-mediated DNA methylation"/>
    <property type="evidence" value="ECO:0000250"/>
    <property type="project" value="UniProtKB"/>
</dbReference>
<dbReference type="CDD" id="cd18078">
    <property type="entry name" value="DEXXQc_Mov10L1"/>
    <property type="match status" value="1"/>
</dbReference>
<dbReference type="CDD" id="cd18808">
    <property type="entry name" value="SF1_C_Upf1"/>
    <property type="match status" value="1"/>
</dbReference>
<dbReference type="FunFam" id="3.40.50.300:FF:000999">
    <property type="entry name" value="Mov10 like RISC complex RNA helicase 1"/>
    <property type="match status" value="1"/>
</dbReference>
<dbReference type="FunFam" id="3.40.50.300:FF:000864">
    <property type="entry name" value="Mov10-like RISC complex RNA helicase 1"/>
    <property type="match status" value="1"/>
</dbReference>
<dbReference type="Gene3D" id="3.40.50.300">
    <property type="entry name" value="P-loop containing nucleotide triphosphate hydrolases"/>
    <property type="match status" value="2"/>
</dbReference>
<dbReference type="InterPro" id="IPR041679">
    <property type="entry name" value="DNA2/NAM7-like_C"/>
</dbReference>
<dbReference type="InterPro" id="IPR041677">
    <property type="entry name" value="DNA2/NAM7_AAA_11"/>
</dbReference>
<dbReference type="InterPro" id="IPR049080">
    <property type="entry name" value="MOV-10-like_beta-barrel"/>
</dbReference>
<dbReference type="InterPro" id="IPR027417">
    <property type="entry name" value="P-loop_NTPase"/>
</dbReference>
<dbReference type="InterPro" id="IPR047187">
    <property type="entry name" value="SF1_C_Upf1"/>
</dbReference>
<dbReference type="PANTHER" id="PTHR45418">
    <property type="entry name" value="CANCER/TESTIS ANTIGEN 55"/>
    <property type="match status" value="1"/>
</dbReference>
<dbReference type="PANTHER" id="PTHR45418:SF1">
    <property type="entry name" value="CANCER_TESTIS ANTIGEN 55"/>
    <property type="match status" value="1"/>
</dbReference>
<dbReference type="Pfam" id="PF13086">
    <property type="entry name" value="AAA_11"/>
    <property type="match status" value="2"/>
</dbReference>
<dbReference type="Pfam" id="PF13087">
    <property type="entry name" value="AAA_12"/>
    <property type="match status" value="1"/>
</dbReference>
<dbReference type="Pfam" id="PF21634">
    <property type="entry name" value="MOV-10_beta-barrel"/>
    <property type="match status" value="1"/>
</dbReference>
<dbReference type="SUPFAM" id="SSF52540">
    <property type="entry name" value="P-loop containing nucleoside triphosphate hydrolases"/>
    <property type="match status" value="1"/>
</dbReference>